<keyword id="KW-0560">Oxidoreductase</keyword>
<keyword id="KW-0663">Pyridoxal phosphate</keyword>
<keyword id="KW-1185">Reference proteome</keyword>
<proteinExistence type="inferred from homology"/>
<accession>Q7UNH1</accession>
<feature type="chain" id="PRO_0000167010" description="Probable glycine dehydrogenase (decarboxylating) subunit 2">
    <location>
        <begin position="1"/>
        <end position="500"/>
    </location>
</feature>
<feature type="modified residue" description="N6-(pyridoxal phosphate)lysine" evidence="1">
    <location>
        <position position="273"/>
    </location>
</feature>
<protein>
    <recommendedName>
        <fullName evidence="1">Probable glycine dehydrogenase (decarboxylating) subunit 2</fullName>
        <ecNumber evidence="1">1.4.4.2</ecNumber>
    </recommendedName>
    <alternativeName>
        <fullName evidence="1">Glycine cleavage system P-protein subunit 2</fullName>
    </alternativeName>
    <alternativeName>
        <fullName evidence="1">Glycine decarboxylase subunit 2</fullName>
    </alternativeName>
    <alternativeName>
        <fullName evidence="1">Glycine dehydrogenase (aminomethyl-transferring) subunit 2</fullName>
    </alternativeName>
</protein>
<dbReference type="EC" id="1.4.4.2" evidence="1"/>
<dbReference type="EMBL" id="BX294146">
    <property type="protein sequence ID" value="CAD75448.1"/>
    <property type="molecule type" value="Genomic_DNA"/>
</dbReference>
<dbReference type="RefSeq" id="NP_867901.1">
    <property type="nucleotide sequence ID" value="NC_005027.1"/>
</dbReference>
<dbReference type="RefSeq" id="WP_011121465.1">
    <property type="nucleotide sequence ID" value="NC_005027.1"/>
</dbReference>
<dbReference type="SMR" id="Q7UNH1"/>
<dbReference type="STRING" id="243090.RB7584"/>
<dbReference type="EnsemblBacteria" id="CAD75448">
    <property type="protein sequence ID" value="CAD75448"/>
    <property type="gene ID" value="RB7584"/>
</dbReference>
<dbReference type="KEGG" id="rba:RB7584"/>
<dbReference type="PATRIC" id="fig|243090.15.peg.3664"/>
<dbReference type="eggNOG" id="COG1003">
    <property type="taxonomic scope" value="Bacteria"/>
</dbReference>
<dbReference type="HOGENOM" id="CLU_004620_5_0_0"/>
<dbReference type="InParanoid" id="Q7UNH1"/>
<dbReference type="OrthoDB" id="9801272at2"/>
<dbReference type="Proteomes" id="UP000001025">
    <property type="component" value="Chromosome"/>
</dbReference>
<dbReference type="GO" id="GO:0005829">
    <property type="term" value="C:cytosol"/>
    <property type="evidence" value="ECO:0000318"/>
    <property type="project" value="GO_Central"/>
</dbReference>
<dbReference type="GO" id="GO:0005960">
    <property type="term" value="C:glycine cleavage complex"/>
    <property type="evidence" value="ECO:0000318"/>
    <property type="project" value="GO_Central"/>
</dbReference>
<dbReference type="GO" id="GO:0016594">
    <property type="term" value="F:glycine binding"/>
    <property type="evidence" value="ECO:0000318"/>
    <property type="project" value="GO_Central"/>
</dbReference>
<dbReference type="GO" id="GO:0004375">
    <property type="term" value="F:glycine dehydrogenase (decarboxylating) activity"/>
    <property type="evidence" value="ECO:0000318"/>
    <property type="project" value="GO_Central"/>
</dbReference>
<dbReference type="GO" id="GO:0030170">
    <property type="term" value="F:pyridoxal phosphate binding"/>
    <property type="evidence" value="ECO:0000318"/>
    <property type="project" value="GO_Central"/>
</dbReference>
<dbReference type="GO" id="GO:0019464">
    <property type="term" value="P:glycine decarboxylation via glycine cleavage system"/>
    <property type="evidence" value="ECO:0000318"/>
    <property type="project" value="GO_Central"/>
</dbReference>
<dbReference type="FunFam" id="3.40.640.10:FF:000224">
    <property type="entry name" value="Probable glycine dehydrogenase (decarboxylating) subunit 2"/>
    <property type="match status" value="1"/>
</dbReference>
<dbReference type="FunFam" id="3.90.1150.10:FF:000014">
    <property type="entry name" value="Probable glycine dehydrogenase (decarboxylating) subunit 2"/>
    <property type="match status" value="1"/>
</dbReference>
<dbReference type="Gene3D" id="6.20.440.10">
    <property type="match status" value="1"/>
</dbReference>
<dbReference type="Gene3D" id="3.90.1150.10">
    <property type="entry name" value="Aspartate Aminotransferase, domain 1"/>
    <property type="match status" value="1"/>
</dbReference>
<dbReference type="Gene3D" id="3.40.640.10">
    <property type="entry name" value="Type I PLP-dependent aspartate aminotransferase-like (Major domain)"/>
    <property type="match status" value="1"/>
</dbReference>
<dbReference type="HAMAP" id="MF_00713">
    <property type="entry name" value="GcvPB"/>
    <property type="match status" value="1"/>
</dbReference>
<dbReference type="InterPro" id="IPR000192">
    <property type="entry name" value="Aminotrans_V_dom"/>
</dbReference>
<dbReference type="InterPro" id="IPR023012">
    <property type="entry name" value="GcvPB"/>
</dbReference>
<dbReference type="InterPro" id="IPR049316">
    <property type="entry name" value="GDC-P_C"/>
</dbReference>
<dbReference type="InterPro" id="IPR020581">
    <property type="entry name" value="GDC_P"/>
</dbReference>
<dbReference type="InterPro" id="IPR015424">
    <property type="entry name" value="PyrdxlP-dep_Trfase"/>
</dbReference>
<dbReference type="InterPro" id="IPR015421">
    <property type="entry name" value="PyrdxlP-dep_Trfase_major"/>
</dbReference>
<dbReference type="InterPro" id="IPR015422">
    <property type="entry name" value="PyrdxlP-dep_Trfase_small"/>
</dbReference>
<dbReference type="NCBIfam" id="NF003346">
    <property type="entry name" value="PRK04366.1"/>
    <property type="match status" value="1"/>
</dbReference>
<dbReference type="PANTHER" id="PTHR11773:SF1">
    <property type="entry name" value="GLYCINE DEHYDROGENASE (DECARBOXYLATING), MITOCHONDRIAL"/>
    <property type="match status" value="1"/>
</dbReference>
<dbReference type="PANTHER" id="PTHR11773">
    <property type="entry name" value="GLYCINE DEHYDROGENASE, DECARBOXYLATING"/>
    <property type="match status" value="1"/>
</dbReference>
<dbReference type="Pfam" id="PF00266">
    <property type="entry name" value="Aminotran_5"/>
    <property type="match status" value="1"/>
</dbReference>
<dbReference type="Pfam" id="PF21478">
    <property type="entry name" value="GcvP2_C"/>
    <property type="match status" value="1"/>
</dbReference>
<dbReference type="SUPFAM" id="SSF53383">
    <property type="entry name" value="PLP-dependent transferases"/>
    <property type="match status" value="1"/>
</dbReference>
<gene>
    <name evidence="1" type="primary">gcvPB</name>
    <name type="ordered locus">RB7584</name>
</gene>
<evidence type="ECO:0000255" key="1">
    <source>
        <dbReference type="HAMAP-Rule" id="MF_00713"/>
    </source>
</evidence>
<name>GCSPB_RHOBA</name>
<sequence>MRNQQSTQLLFELSRAGRRAHRLGDLDVPSVNVDELFADEALAETPPPLPELAEGDVVRHFVGLSTLNMSVDTHFYPLGSCTMKYNPKRNERIASLPGFLNVHPLQHESGLQGLLELLYELQGMFAEISGLPGVSMQPAAGAHGELAALLVAAAYFREQGSDRNVVLTADSAHGTNPASAQMAGFKTKTVKSNANGLVDLEDLKAKLDDKTAVFMLTNPNTLGLFDRQIEEINKLVHDAGALIYLDGANMNAILGITRPGDFGADLMHYNPHKTFSGPHGGGGPGAGPICVRDFLAKYLPGPIVTRVENENASGDDDRYTYHLTSPSDDSIGRVRSFFGNTGVLVRAYIYLRTYGGDGLRHVSEDAVLGANYLLSKVKHFLDVPHGDRCMHEFVASATRLKKEKKLSAMDIAKRILDYGFHAPTVYFPLVVDEAVMVEPTETESKQTLDAFVEALFRITEEGEELIHDAPHSTRISRPDDVTAARRPILKWTDAAGESAT</sequence>
<reference key="1">
    <citation type="journal article" date="2003" name="Proc. Natl. Acad. Sci. U.S.A.">
        <title>Complete genome sequence of the marine planctomycete Pirellula sp. strain 1.</title>
        <authorList>
            <person name="Gloeckner F.O."/>
            <person name="Kube M."/>
            <person name="Bauer M."/>
            <person name="Teeling H."/>
            <person name="Lombardot T."/>
            <person name="Ludwig W."/>
            <person name="Gade D."/>
            <person name="Beck A."/>
            <person name="Borzym K."/>
            <person name="Heitmann K."/>
            <person name="Rabus R."/>
            <person name="Schlesner H."/>
            <person name="Amann R."/>
            <person name="Reinhardt R."/>
        </authorList>
    </citation>
    <scope>NUCLEOTIDE SEQUENCE [LARGE SCALE GENOMIC DNA]</scope>
    <source>
        <strain>DSM 10527 / NCIMB 13988 / SH1</strain>
    </source>
</reference>
<organism>
    <name type="scientific">Rhodopirellula baltica (strain DSM 10527 / NCIMB 13988 / SH1)</name>
    <dbReference type="NCBI Taxonomy" id="243090"/>
    <lineage>
        <taxon>Bacteria</taxon>
        <taxon>Pseudomonadati</taxon>
        <taxon>Planctomycetota</taxon>
        <taxon>Planctomycetia</taxon>
        <taxon>Pirellulales</taxon>
        <taxon>Pirellulaceae</taxon>
        <taxon>Rhodopirellula</taxon>
    </lineage>
</organism>
<comment type="function">
    <text evidence="1">The glycine cleavage system catalyzes the degradation of glycine. The P protein binds the alpha-amino group of glycine through its pyridoxal phosphate cofactor; CO(2) is released and the remaining methylamine moiety is then transferred to the lipoamide cofactor of the H protein.</text>
</comment>
<comment type="catalytic activity">
    <reaction evidence="1">
        <text>N(6)-[(R)-lipoyl]-L-lysyl-[glycine-cleavage complex H protein] + glycine + H(+) = N(6)-[(R)-S(8)-aminomethyldihydrolipoyl]-L-lysyl-[glycine-cleavage complex H protein] + CO2</text>
        <dbReference type="Rhea" id="RHEA:24304"/>
        <dbReference type="Rhea" id="RHEA-COMP:10494"/>
        <dbReference type="Rhea" id="RHEA-COMP:10495"/>
        <dbReference type="ChEBI" id="CHEBI:15378"/>
        <dbReference type="ChEBI" id="CHEBI:16526"/>
        <dbReference type="ChEBI" id="CHEBI:57305"/>
        <dbReference type="ChEBI" id="CHEBI:83099"/>
        <dbReference type="ChEBI" id="CHEBI:83143"/>
        <dbReference type="EC" id="1.4.4.2"/>
    </reaction>
</comment>
<comment type="cofactor">
    <cofactor evidence="1">
        <name>pyridoxal 5'-phosphate</name>
        <dbReference type="ChEBI" id="CHEBI:597326"/>
    </cofactor>
</comment>
<comment type="subunit">
    <text evidence="1">The glycine cleavage system is composed of four proteins: P, T, L and H. In this organism, the P 'protein' is a heterodimer of two subunits.</text>
</comment>
<comment type="similarity">
    <text evidence="1">Belongs to the GcvP family. C-terminal subunit subfamily.</text>
</comment>